<sequence length="451" mass="50305">MASFHSSLLTALCTLCTYGILTMPAYGLDPNHPKHHYHKYSERLKRSNAEDSAFYLSSASESSEDLRQEPRRHILTPVRNVLKDDPCDEGLSISKLLHSIEKETNSQISVDFTILPQWFYPKKSALATSEEKQPTWQFYVSPNISWQLYNSPTAGVGSIDFSYTLIRYWNNSAQNANNAIGIAGEINDYSSRTNTLSLLTFSQTFPGEMLTVSFGQYSLYSIDGTLYDNDQQCGFLSYALSQNASATYSSGSVGAYVQFTPIPSINIQAGFQDAYSIVGSSFDVYNLTKNRYNFYGYFSWAPQSCLGAGQYSALIYSTRNVPQQPVQTTGWSLNFGQYLGEKLYVFGRWNGSTGTAVNLNRSHVLGLASANPINRNPKDLLGAACSMSKVNPKVVTDKKIRKYETVIETFATVGFGPHLSLSPDLQVYIHPARRPDRRSATVYSIRANFFV</sequence>
<feature type="signal peptide" evidence="2">
    <location>
        <begin position="1"/>
        <end position="27"/>
    </location>
</feature>
<feature type="chain" id="PRO_0000363182" description="Porin AaxA">
    <location>
        <begin position="28"/>
        <end position="451"/>
    </location>
</feature>
<organism>
    <name type="scientific">Chlamydia caviae (strain ATCC VR-813 / DSM 19441 / 03DC25 / GPIC)</name>
    <name type="common">Chlamydophila caviae</name>
    <dbReference type="NCBI Taxonomy" id="227941"/>
    <lineage>
        <taxon>Bacteria</taxon>
        <taxon>Pseudomonadati</taxon>
        <taxon>Chlamydiota</taxon>
        <taxon>Chlamydiia</taxon>
        <taxon>Chlamydiales</taxon>
        <taxon>Chlamydiaceae</taxon>
        <taxon>Chlamydia/Chlamydophila group</taxon>
        <taxon>Chlamydia</taxon>
    </lineage>
</organism>
<dbReference type="EMBL" id="AE015925">
    <property type="protein sequence ID" value="AAP05470.1"/>
    <property type="molecule type" value="Genomic_DNA"/>
</dbReference>
<dbReference type="RefSeq" id="WP_011006684.1">
    <property type="nucleotide sequence ID" value="NC_003361.3"/>
</dbReference>
<dbReference type="STRING" id="227941.CCA_00729"/>
<dbReference type="KEGG" id="cca:CCA_00729"/>
<dbReference type="eggNOG" id="COG3659">
    <property type="taxonomic scope" value="Bacteria"/>
</dbReference>
<dbReference type="HOGENOM" id="CLU_619231_0_0_0"/>
<dbReference type="OrthoDB" id="18651at2"/>
<dbReference type="Proteomes" id="UP000002193">
    <property type="component" value="Chromosome"/>
</dbReference>
<dbReference type="GO" id="GO:0009279">
    <property type="term" value="C:cell outer membrane"/>
    <property type="evidence" value="ECO:0007669"/>
    <property type="project" value="UniProtKB-SubCell"/>
</dbReference>
<dbReference type="GO" id="GO:0046930">
    <property type="term" value="C:pore complex"/>
    <property type="evidence" value="ECO:0007669"/>
    <property type="project" value="UniProtKB-KW"/>
</dbReference>
<dbReference type="GO" id="GO:0015288">
    <property type="term" value="F:porin activity"/>
    <property type="evidence" value="ECO:0007669"/>
    <property type="project" value="UniProtKB-KW"/>
</dbReference>
<dbReference type="GO" id="GO:0006865">
    <property type="term" value="P:amino acid transport"/>
    <property type="evidence" value="ECO:0007669"/>
    <property type="project" value="UniProtKB-KW"/>
</dbReference>
<dbReference type="GO" id="GO:0008643">
    <property type="term" value="P:carbohydrate transport"/>
    <property type="evidence" value="ECO:0007669"/>
    <property type="project" value="InterPro"/>
</dbReference>
<dbReference type="GO" id="GO:0006811">
    <property type="term" value="P:monoatomic ion transport"/>
    <property type="evidence" value="ECO:0007669"/>
    <property type="project" value="UniProtKB-KW"/>
</dbReference>
<dbReference type="Gene3D" id="2.40.160.180">
    <property type="entry name" value="Carbohydrate-selective porin OprB"/>
    <property type="match status" value="1"/>
</dbReference>
<dbReference type="InterPro" id="IPR007049">
    <property type="entry name" value="Carb-sel_porin_OprB"/>
</dbReference>
<dbReference type="InterPro" id="IPR038673">
    <property type="entry name" value="OprB_sf"/>
</dbReference>
<dbReference type="Pfam" id="PF04966">
    <property type="entry name" value="OprB"/>
    <property type="match status" value="1"/>
</dbReference>
<name>AAXA_CHLCV</name>
<gene>
    <name type="primary">aaxA</name>
    <name type="ordered locus">CCA_00729</name>
</gene>
<evidence type="ECO:0000250" key="1"/>
<evidence type="ECO:0000255" key="2"/>
<evidence type="ECO:0000305" key="3"/>
<reference key="1">
    <citation type="journal article" date="2003" name="Nucleic Acids Res.">
        <title>Genome sequence of Chlamydophila caviae (Chlamydia psittaci GPIC): examining the role of niche-specific genes in the evolution of the Chlamydiaceae.</title>
        <authorList>
            <person name="Read T.D."/>
            <person name="Myers G.S.A."/>
            <person name="Brunham R.C."/>
            <person name="Nelson W.C."/>
            <person name="Paulsen I.T."/>
            <person name="Heidelberg J.F."/>
            <person name="Holtzapple E.K."/>
            <person name="Khouri H.M."/>
            <person name="Federova N.B."/>
            <person name="Carty H.A."/>
            <person name="Umayam L.A."/>
            <person name="Haft D.H."/>
            <person name="Peterson J.D."/>
            <person name="Beanan M.J."/>
            <person name="White O."/>
            <person name="Salzberg S.L."/>
            <person name="Hsia R.-C."/>
            <person name="McClarty G."/>
            <person name="Rank R.G."/>
            <person name="Bavoil P.M."/>
            <person name="Fraser C.M."/>
        </authorList>
    </citation>
    <scope>NUCLEOTIDE SEQUENCE [LARGE SCALE GENOMIC DNA]</scope>
    <source>
        <strain>ATCC VR-813 / DSM 19441 / 03DC25 / GPIC</strain>
    </source>
</reference>
<proteinExistence type="inferred from homology"/>
<comment type="function">
    <text evidence="1">Facilitates L-arginine uptake, as part of the AaxABC system. The arginine uptake by the bacterium in the macrophage may be a virulence factor against the host innate immune response (By similarity).</text>
</comment>
<comment type="subcellular location">
    <subcellularLocation>
        <location evidence="1">Cell outer membrane</location>
        <topology evidence="1">Multi-pass membrane protein</topology>
    </subcellularLocation>
</comment>
<comment type="similarity">
    <text evidence="3">Belongs to the OprB family.</text>
</comment>
<protein>
    <recommendedName>
        <fullName>Porin AaxA</fullName>
    </recommendedName>
    <alternativeName>
        <fullName>Outer membrane protein AaxA</fullName>
    </alternativeName>
</protein>
<accession>Q822F4</accession>
<keyword id="KW-0029">Amino-acid transport</keyword>
<keyword id="KW-0998">Cell outer membrane</keyword>
<keyword id="KW-0406">Ion transport</keyword>
<keyword id="KW-0472">Membrane</keyword>
<keyword id="KW-0626">Porin</keyword>
<keyword id="KW-0732">Signal</keyword>
<keyword id="KW-0812">Transmembrane</keyword>
<keyword id="KW-1134">Transmembrane beta strand</keyword>
<keyword id="KW-0813">Transport</keyword>
<keyword id="KW-0843">Virulence</keyword>